<organism>
    <name type="scientific">Dehalococcoides mccartyi (strain CBDB1)</name>
    <dbReference type="NCBI Taxonomy" id="255470"/>
    <lineage>
        <taxon>Bacteria</taxon>
        <taxon>Bacillati</taxon>
        <taxon>Chloroflexota</taxon>
        <taxon>Dehalococcoidia</taxon>
        <taxon>Dehalococcoidales</taxon>
        <taxon>Dehalococcoidaceae</taxon>
        <taxon>Dehalococcoides</taxon>
    </lineage>
</organism>
<proteinExistence type="inferred from homology"/>
<dbReference type="EC" id="4.2.1.10" evidence="1"/>
<dbReference type="EMBL" id="AJ965256">
    <property type="protein sequence ID" value="CAI82631.1"/>
    <property type="molecule type" value="Genomic_DNA"/>
</dbReference>
<dbReference type="RefSeq" id="WP_011308988.1">
    <property type="nucleotide sequence ID" value="NC_007356.1"/>
</dbReference>
<dbReference type="SMR" id="Q3ZZN2"/>
<dbReference type="KEGG" id="deh:cbdbA430"/>
<dbReference type="HOGENOM" id="CLU_064444_2_1_0"/>
<dbReference type="UniPathway" id="UPA00053">
    <property type="reaction ID" value="UER00086"/>
</dbReference>
<dbReference type="Proteomes" id="UP000000433">
    <property type="component" value="Chromosome"/>
</dbReference>
<dbReference type="GO" id="GO:0003855">
    <property type="term" value="F:3-dehydroquinate dehydratase activity"/>
    <property type="evidence" value="ECO:0007669"/>
    <property type="project" value="UniProtKB-UniRule"/>
</dbReference>
<dbReference type="GO" id="GO:0046279">
    <property type="term" value="P:3,4-dihydroxybenzoate biosynthetic process"/>
    <property type="evidence" value="ECO:0007669"/>
    <property type="project" value="TreeGrafter"/>
</dbReference>
<dbReference type="GO" id="GO:0008652">
    <property type="term" value="P:amino acid biosynthetic process"/>
    <property type="evidence" value="ECO:0007669"/>
    <property type="project" value="UniProtKB-KW"/>
</dbReference>
<dbReference type="GO" id="GO:0009073">
    <property type="term" value="P:aromatic amino acid family biosynthetic process"/>
    <property type="evidence" value="ECO:0007669"/>
    <property type="project" value="UniProtKB-KW"/>
</dbReference>
<dbReference type="GO" id="GO:0009423">
    <property type="term" value="P:chorismate biosynthetic process"/>
    <property type="evidence" value="ECO:0007669"/>
    <property type="project" value="UniProtKB-UniRule"/>
</dbReference>
<dbReference type="CDD" id="cd00502">
    <property type="entry name" value="DHQase_I"/>
    <property type="match status" value="1"/>
</dbReference>
<dbReference type="Gene3D" id="3.20.20.70">
    <property type="entry name" value="Aldolase class I"/>
    <property type="match status" value="1"/>
</dbReference>
<dbReference type="HAMAP" id="MF_00214">
    <property type="entry name" value="AroD"/>
    <property type="match status" value="1"/>
</dbReference>
<dbReference type="InterPro" id="IPR013785">
    <property type="entry name" value="Aldolase_TIM"/>
</dbReference>
<dbReference type="InterPro" id="IPR001381">
    <property type="entry name" value="DHquinase_I"/>
</dbReference>
<dbReference type="InterPro" id="IPR050146">
    <property type="entry name" value="Type-I_3-dehydroquinase"/>
</dbReference>
<dbReference type="NCBIfam" id="TIGR01093">
    <property type="entry name" value="aroD"/>
    <property type="match status" value="1"/>
</dbReference>
<dbReference type="PANTHER" id="PTHR43699">
    <property type="entry name" value="3-DEHYDROQUINATE DEHYDRATASE"/>
    <property type="match status" value="1"/>
</dbReference>
<dbReference type="PANTHER" id="PTHR43699:SF1">
    <property type="entry name" value="3-DEHYDROQUINATE DEHYDRATASE"/>
    <property type="match status" value="1"/>
</dbReference>
<dbReference type="Pfam" id="PF01487">
    <property type="entry name" value="DHquinase_I"/>
    <property type="match status" value="1"/>
</dbReference>
<dbReference type="SUPFAM" id="SSF51569">
    <property type="entry name" value="Aldolase"/>
    <property type="match status" value="1"/>
</dbReference>
<feature type="chain" id="PRO_0000325523" description="3-dehydroquinate dehydratase">
    <location>
        <begin position="1"/>
        <end position="222"/>
    </location>
</feature>
<feature type="active site" description="Proton donor/acceptor" evidence="1">
    <location>
        <position position="112"/>
    </location>
</feature>
<feature type="active site" description="Schiff-base intermediate with substrate" evidence="1">
    <location>
        <position position="139"/>
    </location>
</feature>
<feature type="binding site" evidence="1">
    <location>
        <begin position="29"/>
        <end position="31"/>
    </location>
    <ligand>
        <name>3-dehydroquinate</name>
        <dbReference type="ChEBI" id="CHEBI:32364"/>
    </ligand>
</feature>
<feature type="binding site" evidence="1">
    <location>
        <position position="55"/>
    </location>
    <ligand>
        <name>3-dehydroquinate</name>
        <dbReference type="ChEBI" id="CHEBI:32364"/>
    </ligand>
</feature>
<feature type="binding site" evidence="1">
    <location>
        <position position="178"/>
    </location>
    <ligand>
        <name>3-dehydroquinate</name>
        <dbReference type="ChEBI" id="CHEBI:32364"/>
    </ligand>
</feature>
<feature type="binding site" evidence="1">
    <location>
        <position position="199"/>
    </location>
    <ligand>
        <name>3-dehydroquinate</name>
        <dbReference type="ChEBI" id="CHEBI:32364"/>
    </ligand>
</feature>
<feature type="binding site" evidence="1">
    <location>
        <position position="203"/>
    </location>
    <ligand>
        <name>3-dehydroquinate</name>
        <dbReference type="ChEBI" id="CHEBI:32364"/>
    </ligand>
</feature>
<sequence>MKIPPICCVITQLPQAETLKKSEGAAFYELRLDLLGENWRETAVLLNKPFMATCRRSAEGGSFKGNEAERINRLEKAASAGAFMLDIEYSTPNLEEVLGRLRPQAKCLLSHHNFTDTPSAAKLKTLLKDMLTHQADIYKVITTATSINDNINLLNLTKEIPDKKIVAFAMGEPGILSRILCPLAGSPFTYASLNDGNKSASGQMTLAQMIEIYRSVNYANHT</sequence>
<gene>
    <name evidence="1" type="primary">aroD</name>
    <name type="ordered locus">cbdbA430</name>
</gene>
<protein>
    <recommendedName>
        <fullName evidence="1">3-dehydroquinate dehydratase</fullName>
        <shortName evidence="1">3-dehydroquinase</shortName>
        <ecNumber evidence="1">4.2.1.10</ecNumber>
    </recommendedName>
    <alternativeName>
        <fullName evidence="1">Type I DHQase</fullName>
    </alternativeName>
    <alternativeName>
        <fullName evidence="1">Type I dehydroquinase</fullName>
        <shortName evidence="1">DHQ1</shortName>
    </alternativeName>
</protein>
<accession>Q3ZZN2</accession>
<keyword id="KW-0028">Amino-acid biosynthesis</keyword>
<keyword id="KW-0057">Aromatic amino acid biosynthesis</keyword>
<keyword id="KW-0456">Lyase</keyword>
<keyword id="KW-0704">Schiff base</keyword>
<reference key="1">
    <citation type="journal article" date="2005" name="Nat. Biotechnol.">
        <title>Genome sequence of the chlorinated compound-respiring bacterium Dehalococcoides species strain CBDB1.</title>
        <authorList>
            <person name="Kube M."/>
            <person name="Beck A."/>
            <person name="Zinder S.H."/>
            <person name="Kuhl H."/>
            <person name="Reinhardt R."/>
            <person name="Adrian L."/>
        </authorList>
    </citation>
    <scope>NUCLEOTIDE SEQUENCE [LARGE SCALE GENOMIC DNA]</scope>
    <source>
        <strain>CBDB1</strain>
    </source>
</reference>
<comment type="function">
    <text evidence="1">Involved in the third step of the chorismate pathway, which leads to the biosynthesis of aromatic amino acids. Catalyzes the cis-dehydration of 3-dehydroquinate (DHQ) and introduces the first double bond of the aromatic ring to yield 3-dehydroshikimate.</text>
</comment>
<comment type="catalytic activity">
    <reaction evidence="1">
        <text>3-dehydroquinate = 3-dehydroshikimate + H2O</text>
        <dbReference type="Rhea" id="RHEA:21096"/>
        <dbReference type="ChEBI" id="CHEBI:15377"/>
        <dbReference type="ChEBI" id="CHEBI:16630"/>
        <dbReference type="ChEBI" id="CHEBI:32364"/>
        <dbReference type="EC" id="4.2.1.10"/>
    </reaction>
</comment>
<comment type="pathway">
    <text evidence="1">Metabolic intermediate biosynthesis; chorismate biosynthesis; chorismate from D-erythrose 4-phosphate and phosphoenolpyruvate: step 3/7.</text>
</comment>
<comment type="subunit">
    <text evidence="1">Homodimer.</text>
</comment>
<comment type="similarity">
    <text evidence="1">Belongs to the type-I 3-dehydroquinase family.</text>
</comment>
<name>AROD_DEHMC</name>
<evidence type="ECO:0000255" key="1">
    <source>
        <dbReference type="HAMAP-Rule" id="MF_00214"/>
    </source>
</evidence>